<name>MYLK3_RAT</name>
<keyword id="KW-0067">ATP-binding</keyword>
<keyword id="KW-0963">Cytoplasm</keyword>
<keyword id="KW-0418">Kinase</keyword>
<keyword id="KW-0460">Magnesium</keyword>
<keyword id="KW-0547">Nucleotide-binding</keyword>
<keyword id="KW-0597">Phosphoprotein</keyword>
<keyword id="KW-1185">Reference proteome</keyword>
<keyword id="KW-0723">Serine/threonine-protein kinase</keyword>
<keyword id="KW-0808">Transferase</keyword>
<accession>E9PT87</accession>
<accession>A8WE96</accession>
<dbReference type="EC" id="2.7.11.18"/>
<dbReference type="EMBL" id="EU236721">
    <property type="protein sequence ID" value="ABW96144.1"/>
    <property type="molecule type" value="mRNA"/>
</dbReference>
<dbReference type="RefSeq" id="NP_001104280.1">
    <property type="nucleotide sequence ID" value="NM_001110810.1"/>
</dbReference>
<dbReference type="SMR" id="E9PT87"/>
<dbReference type="BioGRID" id="253688">
    <property type="interactions" value="1"/>
</dbReference>
<dbReference type="FunCoup" id="E9PT87">
    <property type="interactions" value="817"/>
</dbReference>
<dbReference type="STRING" id="10116.ENSRNOP00000023657"/>
<dbReference type="iPTMnet" id="E9PT87"/>
<dbReference type="PhosphoSitePlus" id="E9PT87"/>
<dbReference type="jPOST" id="E9PT87"/>
<dbReference type="PaxDb" id="10116-ENSRNOP00000023657"/>
<dbReference type="PeptideAtlas" id="E9PT87"/>
<dbReference type="Ensembl" id="ENSRNOT00000023657.7">
    <property type="protein sequence ID" value="ENSRNOP00000023657.5"/>
    <property type="gene ID" value="ENSRNOG00000017546.8"/>
</dbReference>
<dbReference type="GeneID" id="291926"/>
<dbReference type="KEGG" id="rno:291926"/>
<dbReference type="AGR" id="RGD:1305801"/>
<dbReference type="CTD" id="91807"/>
<dbReference type="RGD" id="1305801">
    <property type="gene designation" value="Mylk3"/>
</dbReference>
<dbReference type="eggNOG" id="KOG0032">
    <property type="taxonomic scope" value="Eukaryota"/>
</dbReference>
<dbReference type="GeneTree" id="ENSGT00940000160007"/>
<dbReference type="HOGENOM" id="CLU_000288_90_0_1"/>
<dbReference type="InParanoid" id="E9PT87"/>
<dbReference type="OMA" id="IHVQEMD"/>
<dbReference type="OrthoDB" id="59325at9989"/>
<dbReference type="TreeFam" id="TF314166"/>
<dbReference type="PRO" id="PR:E9PT87"/>
<dbReference type="Proteomes" id="UP000002494">
    <property type="component" value="Chromosome 19"/>
</dbReference>
<dbReference type="Bgee" id="ENSRNOG00000017546">
    <property type="expression patterns" value="Expressed in heart and 7 other cell types or tissues"/>
</dbReference>
<dbReference type="GO" id="GO:0015629">
    <property type="term" value="C:actin cytoskeleton"/>
    <property type="evidence" value="ECO:0000266"/>
    <property type="project" value="RGD"/>
</dbReference>
<dbReference type="GO" id="GO:0005737">
    <property type="term" value="C:cytoplasm"/>
    <property type="evidence" value="ECO:0000266"/>
    <property type="project" value="RGD"/>
</dbReference>
<dbReference type="GO" id="GO:0005829">
    <property type="term" value="C:cytosol"/>
    <property type="evidence" value="ECO:0000314"/>
    <property type="project" value="BHF-UCL"/>
</dbReference>
<dbReference type="GO" id="GO:0005524">
    <property type="term" value="F:ATP binding"/>
    <property type="evidence" value="ECO:0007669"/>
    <property type="project" value="UniProtKB-KW"/>
</dbReference>
<dbReference type="GO" id="GO:0004683">
    <property type="term" value="F:calcium/calmodulin-dependent protein kinase activity"/>
    <property type="evidence" value="ECO:0000314"/>
    <property type="project" value="BHF-UCL"/>
</dbReference>
<dbReference type="GO" id="GO:0004687">
    <property type="term" value="F:myosin light chain kinase activity"/>
    <property type="evidence" value="ECO:0000315"/>
    <property type="project" value="BHF-UCL"/>
</dbReference>
<dbReference type="GO" id="GO:0055003">
    <property type="term" value="P:cardiac myofibril assembly"/>
    <property type="evidence" value="ECO:0000315"/>
    <property type="project" value="BHF-UCL"/>
</dbReference>
<dbReference type="GO" id="GO:0071347">
    <property type="term" value="P:cellular response to interleukin-1"/>
    <property type="evidence" value="ECO:0000266"/>
    <property type="project" value="RGD"/>
</dbReference>
<dbReference type="GO" id="GO:1905710">
    <property type="term" value="P:positive regulation of membrane permeability"/>
    <property type="evidence" value="ECO:0000266"/>
    <property type="project" value="RGD"/>
</dbReference>
<dbReference type="GO" id="GO:0060298">
    <property type="term" value="P:positive regulation of sarcomere organization"/>
    <property type="evidence" value="ECO:0000314"/>
    <property type="project" value="BHF-UCL"/>
</dbReference>
<dbReference type="GO" id="GO:1905075">
    <property type="term" value="P:positive regulation of tight junction disassembly"/>
    <property type="evidence" value="ECO:0000266"/>
    <property type="project" value="RGD"/>
</dbReference>
<dbReference type="GO" id="GO:0045214">
    <property type="term" value="P:sarcomere organization"/>
    <property type="evidence" value="ECO:0000315"/>
    <property type="project" value="BHF-UCL"/>
</dbReference>
<dbReference type="GO" id="GO:0048769">
    <property type="term" value="P:sarcomerogenesis"/>
    <property type="evidence" value="ECO:0000315"/>
    <property type="project" value="BHF-UCL"/>
</dbReference>
<dbReference type="GO" id="GO:0007165">
    <property type="term" value="P:signal transduction"/>
    <property type="evidence" value="ECO:0000318"/>
    <property type="project" value="GO_Central"/>
</dbReference>
<dbReference type="CDD" id="cd14192">
    <property type="entry name" value="STKc_MLCK3"/>
    <property type="match status" value="1"/>
</dbReference>
<dbReference type="FunFam" id="3.30.200.20:FF:000196">
    <property type="entry name" value="Myosin light chain kinase family, member 4"/>
    <property type="match status" value="1"/>
</dbReference>
<dbReference type="FunFam" id="1.10.510.10:FF:000135">
    <property type="entry name" value="Putative myosin light chain kinase 3"/>
    <property type="match status" value="1"/>
</dbReference>
<dbReference type="Gene3D" id="3.30.200.20">
    <property type="entry name" value="Phosphorylase Kinase, domain 1"/>
    <property type="match status" value="1"/>
</dbReference>
<dbReference type="Gene3D" id="1.10.510.10">
    <property type="entry name" value="Transferase(Phosphotransferase) domain 1"/>
    <property type="match status" value="1"/>
</dbReference>
<dbReference type="InterPro" id="IPR011009">
    <property type="entry name" value="Kinase-like_dom_sf"/>
</dbReference>
<dbReference type="InterPro" id="IPR000719">
    <property type="entry name" value="Prot_kinase_dom"/>
</dbReference>
<dbReference type="InterPro" id="IPR017441">
    <property type="entry name" value="Protein_kinase_ATP_BS"/>
</dbReference>
<dbReference type="InterPro" id="IPR008271">
    <property type="entry name" value="Ser/Thr_kinase_AS"/>
</dbReference>
<dbReference type="PANTHER" id="PTHR24342:SF20">
    <property type="entry name" value="MYOSIN LIGHT CHAIN KINASE, SMOOTH MUSCLE"/>
    <property type="match status" value="1"/>
</dbReference>
<dbReference type="PANTHER" id="PTHR24342">
    <property type="entry name" value="SERINE/THREONINE-PROTEIN KINASE 17"/>
    <property type="match status" value="1"/>
</dbReference>
<dbReference type="Pfam" id="PF00069">
    <property type="entry name" value="Pkinase"/>
    <property type="match status" value="1"/>
</dbReference>
<dbReference type="SMART" id="SM00220">
    <property type="entry name" value="S_TKc"/>
    <property type="match status" value="1"/>
</dbReference>
<dbReference type="SUPFAM" id="SSF56112">
    <property type="entry name" value="Protein kinase-like (PK-like)"/>
    <property type="match status" value="1"/>
</dbReference>
<dbReference type="PROSITE" id="PS00107">
    <property type="entry name" value="PROTEIN_KINASE_ATP"/>
    <property type="match status" value="1"/>
</dbReference>
<dbReference type="PROSITE" id="PS50011">
    <property type="entry name" value="PROTEIN_KINASE_DOM"/>
    <property type="match status" value="1"/>
</dbReference>
<dbReference type="PROSITE" id="PS00108">
    <property type="entry name" value="PROTEIN_KINASE_ST"/>
    <property type="match status" value="1"/>
</dbReference>
<sequence>MSGVSEEDPEGLGPQGLPALGGACLVTVDKKLNVLTEKVDRLLHFQEDVTEKLQCVCQGMDHLEQGLHRLEASQELGLAGPGSTSPAAAQAAWPEVLELVRAVRQEGAQHGARLEALFKMVVAVDRAITLVGSTIQNSKVDDFILQGTVPWRKGSLADGPEENKEQAEVAGVKPKHVLNTGSVQAATSRALWEESQKQDTPVGTVEGLPLIIDTSLKGADLTQAGASLRQGVEALDPGQEPPPTEAESRLPALASEDTGTTLELSVAIDRISEVLTSLRMSQSAGEGTSSSKPDCSEPGPQPLGPLTTDSDIHSDEGLPRISVRMREMTTPEELFETQGGSPIGSAEAPGPGTVLEDQIPKGARPFPPLPKRSCNNGGASAEEATGPGAEPIRGPSLVTRDWRDEPVGTTDLQQGRDPGAVSPEPGKDHAAQGPGRTEAGRRVSSAAEAAIVVLDDSAAPPAPFEHRVVSIKDTLISTSYTVSQHEVLGGGRFGQVHRCTERSTGLALAAKIIKVKNIKDREDVKNEINIMNQLSHVNLIQLYDAFESKNSFTLIMEYVDGGELFDRITDEKYHLTELDVVLFTRQICEGVHYLHQHYILHLDLKPENILCVSQTGHQIKIIDFGLARRYKPREKLKVNFGTPEFLAPEVVNYEFVSFPTDMWSVGVITYMLLSGLSPFLGETDAETMNFIVNCSWDFDADTFKGLSEEAKDFVSRLLVKEKSCRMSATQCLKHEWLNHLIAKASGSNVRLRSQLLLQKYMAQRKWKKHFHVVTAVNRLRKFPTCP</sequence>
<proteinExistence type="evidence at protein level"/>
<feature type="chain" id="PRO_0000419665" description="Myosin light chain kinase 3">
    <location>
        <begin position="1"/>
        <end position="786"/>
    </location>
</feature>
<feature type="domain" description="Protein kinase" evidence="2">
    <location>
        <begin position="482"/>
        <end position="737"/>
    </location>
</feature>
<feature type="region of interest" description="Disordered" evidence="4">
    <location>
        <begin position="233"/>
        <end position="258"/>
    </location>
</feature>
<feature type="region of interest" description="Disordered" evidence="4">
    <location>
        <begin position="279"/>
        <end position="315"/>
    </location>
</feature>
<feature type="region of interest" description="Disordered" evidence="4">
    <location>
        <begin position="333"/>
        <end position="443"/>
    </location>
</feature>
<feature type="compositionally biased region" description="Polar residues" evidence="4">
    <location>
        <begin position="279"/>
        <end position="293"/>
    </location>
</feature>
<feature type="active site" description="Proton acceptor" evidence="2 3">
    <location>
        <position position="603"/>
    </location>
</feature>
<feature type="binding site" evidence="2">
    <location>
        <begin position="488"/>
        <end position="496"/>
    </location>
    <ligand>
        <name>ATP</name>
        <dbReference type="ChEBI" id="CHEBI:30616"/>
    </ligand>
</feature>
<feature type="binding site" evidence="2">
    <location>
        <position position="511"/>
    </location>
    <ligand>
        <name>ATP</name>
        <dbReference type="ChEBI" id="CHEBI:30616"/>
    </ligand>
</feature>
<feature type="modified residue" description="Phosphoserine" evidence="8">
    <location>
        <position position="155"/>
    </location>
</feature>
<feature type="modified residue" description="Phosphoserine" evidence="8">
    <location>
        <position position="341"/>
    </location>
</feature>
<feature type="modified residue" description="Phosphoserine" evidence="8">
    <location>
        <position position="422"/>
    </location>
</feature>
<feature type="sequence conflict" description="In Ref. 1; ABW96144." evidence="7" ref="1">
    <original>T</original>
    <variation>A</variation>
    <location>
        <position position="244"/>
    </location>
</feature>
<protein>
    <recommendedName>
        <fullName>Myosin light chain kinase 3</fullName>
        <ecNumber>2.7.11.18</ecNumber>
    </recommendedName>
    <alternativeName>
        <fullName>Cardiac-MyBP-C-associated Ca/CaM kinase</fullName>
        <shortName>Cardiac-MLCK</shortName>
    </alternativeName>
</protein>
<gene>
    <name type="primary">Mylk3</name>
</gene>
<evidence type="ECO:0000250" key="1"/>
<evidence type="ECO:0000255" key="2">
    <source>
        <dbReference type="PROSITE-ProRule" id="PRU00159"/>
    </source>
</evidence>
<evidence type="ECO:0000255" key="3">
    <source>
        <dbReference type="PROSITE-ProRule" id="PRU10027"/>
    </source>
</evidence>
<evidence type="ECO:0000256" key="4">
    <source>
        <dbReference type="SAM" id="MobiDB-lite"/>
    </source>
</evidence>
<evidence type="ECO:0000269" key="5">
    <source>
    </source>
</evidence>
<evidence type="ECO:0000269" key="6">
    <source>
    </source>
</evidence>
<evidence type="ECO:0000305" key="7"/>
<evidence type="ECO:0007744" key="8">
    <source>
    </source>
</evidence>
<reference key="1">
    <citation type="journal article" date="2010" name="Cardiovasc. Res.">
        <title>Cardiac functional improvement in rats with myocardial infarction by up-regulating cardiac myosin light chain kinase with neuregulin.</title>
        <authorList>
            <person name="Gu X."/>
            <person name="Liu X."/>
            <person name="Xu D."/>
            <person name="Li X."/>
            <person name="Yan M."/>
            <person name="Qi Y."/>
            <person name="Yan W."/>
            <person name="Wang W."/>
            <person name="Pan J."/>
            <person name="Xu Y."/>
            <person name="Xi B."/>
            <person name="Cheng L."/>
            <person name="Jia J."/>
            <person name="Wang K."/>
            <person name="Ge J."/>
            <person name="Zhou M."/>
        </authorList>
    </citation>
    <scope>NUCLEOTIDE SEQUENCE [MRNA]</scope>
    <scope>FUNCTION</scope>
    <scope>INDUCTION</scope>
    <scope>TISSUE SPECIFICITY</scope>
    <source>
        <strain>Wistar</strain>
    </source>
</reference>
<reference key="2">
    <citation type="journal article" date="2004" name="Nature">
        <title>Genome sequence of the Brown Norway rat yields insights into mammalian evolution.</title>
        <authorList>
            <person name="Gibbs R.A."/>
            <person name="Weinstock G.M."/>
            <person name="Metzker M.L."/>
            <person name="Muzny D.M."/>
            <person name="Sodergren E.J."/>
            <person name="Scherer S."/>
            <person name="Scott G."/>
            <person name="Steffen D."/>
            <person name="Worley K.C."/>
            <person name="Burch P.E."/>
            <person name="Okwuonu G."/>
            <person name="Hines S."/>
            <person name="Lewis L."/>
            <person name="Deramo C."/>
            <person name="Delgado O."/>
            <person name="Dugan-Rocha S."/>
            <person name="Miner G."/>
            <person name="Morgan M."/>
            <person name="Hawes A."/>
            <person name="Gill R."/>
            <person name="Holt R.A."/>
            <person name="Adams M.D."/>
            <person name="Amanatides P.G."/>
            <person name="Baden-Tillson H."/>
            <person name="Barnstead M."/>
            <person name="Chin S."/>
            <person name="Evans C.A."/>
            <person name="Ferriera S."/>
            <person name="Fosler C."/>
            <person name="Glodek A."/>
            <person name="Gu Z."/>
            <person name="Jennings D."/>
            <person name="Kraft C.L."/>
            <person name="Nguyen T."/>
            <person name="Pfannkoch C.M."/>
            <person name="Sitter C."/>
            <person name="Sutton G.G."/>
            <person name="Venter J.C."/>
            <person name="Woodage T."/>
            <person name="Smith D."/>
            <person name="Lee H.-M."/>
            <person name="Gustafson E."/>
            <person name="Cahill P."/>
            <person name="Kana A."/>
            <person name="Doucette-Stamm L."/>
            <person name="Weinstock K."/>
            <person name="Fechtel K."/>
            <person name="Weiss R.B."/>
            <person name="Dunn D.M."/>
            <person name="Green E.D."/>
            <person name="Blakesley R.W."/>
            <person name="Bouffard G.G."/>
            <person name="De Jong P.J."/>
            <person name="Osoegawa K."/>
            <person name="Zhu B."/>
            <person name="Marra M."/>
            <person name="Schein J."/>
            <person name="Bosdet I."/>
            <person name="Fjell C."/>
            <person name="Jones S."/>
            <person name="Krzywinski M."/>
            <person name="Mathewson C."/>
            <person name="Siddiqui A."/>
            <person name="Wye N."/>
            <person name="McPherson J."/>
            <person name="Zhao S."/>
            <person name="Fraser C.M."/>
            <person name="Shetty J."/>
            <person name="Shatsman S."/>
            <person name="Geer K."/>
            <person name="Chen Y."/>
            <person name="Abramzon S."/>
            <person name="Nierman W.C."/>
            <person name="Havlak P.H."/>
            <person name="Chen R."/>
            <person name="Durbin K.J."/>
            <person name="Egan A."/>
            <person name="Ren Y."/>
            <person name="Song X.-Z."/>
            <person name="Li B."/>
            <person name="Liu Y."/>
            <person name="Qin X."/>
            <person name="Cawley S."/>
            <person name="Cooney A.J."/>
            <person name="D'Souza L.M."/>
            <person name="Martin K."/>
            <person name="Wu J.Q."/>
            <person name="Gonzalez-Garay M.L."/>
            <person name="Jackson A.R."/>
            <person name="Kalafus K.J."/>
            <person name="McLeod M.P."/>
            <person name="Milosavljevic A."/>
            <person name="Virk D."/>
            <person name="Volkov A."/>
            <person name="Wheeler D.A."/>
            <person name="Zhang Z."/>
            <person name="Bailey J.A."/>
            <person name="Eichler E.E."/>
            <person name="Tuzun E."/>
            <person name="Birney E."/>
            <person name="Mongin E."/>
            <person name="Ureta-Vidal A."/>
            <person name="Woodwark C."/>
            <person name="Zdobnov E."/>
            <person name="Bork P."/>
            <person name="Suyama M."/>
            <person name="Torrents D."/>
            <person name="Alexandersson M."/>
            <person name="Trask B.J."/>
            <person name="Young J.M."/>
            <person name="Huang H."/>
            <person name="Wang H."/>
            <person name="Xing H."/>
            <person name="Daniels S."/>
            <person name="Gietzen D."/>
            <person name="Schmidt J."/>
            <person name="Stevens K."/>
            <person name="Vitt U."/>
            <person name="Wingrove J."/>
            <person name="Camara F."/>
            <person name="Mar Alba M."/>
            <person name="Abril J.F."/>
            <person name="Guigo R."/>
            <person name="Smit A."/>
            <person name="Dubchak I."/>
            <person name="Rubin E.M."/>
            <person name="Couronne O."/>
            <person name="Poliakov A."/>
            <person name="Huebner N."/>
            <person name="Ganten D."/>
            <person name="Goesele C."/>
            <person name="Hummel O."/>
            <person name="Kreitler T."/>
            <person name="Lee Y.-A."/>
            <person name="Monti J."/>
            <person name="Schulz H."/>
            <person name="Zimdahl H."/>
            <person name="Himmelbauer H."/>
            <person name="Lehrach H."/>
            <person name="Jacob H.J."/>
            <person name="Bromberg S."/>
            <person name="Gullings-Handley J."/>
            <person name="Jensen-Seaman M.I."/>
            <person name="Kwitek A.E."/>
            <person name="Lazar J."/>
            <person name="Pasko D."/>
            <person name="Tonellato P.J."/>
            <person name="Twigger S."/>
            <person name="Ponting C.P."/>
            <person name="Duarte J.M."/>
            <person name="Rice S."/>
            <person name="Goodstadt L."/>
            <person name="Beatson S.A."/>
            <person name="Emes R.D."/>
            <person name="Winter E.E."/>
            <person name="Webber C."/>
            <person name="Brandt P."/>
            <person name="Nyakatura G."/>
            <person name="Adetobi M."/>
            <person name="Chiaromonte F."/>
            <person name="Elnitski L."/>
            <person name="Eswara P."/>
            <person name="Hardison R.C."/>
            <person name="Hou M."/>
            <person name="Kolbe D."/>
            <person name="Makova K."/>
            <person name="Miller W."/>
            <person name="Nekrutenko A."/>
            <person name="Riemer C."/>
            <person name="Schwartz S."/>
            <person name="Taylor J."/>
            <person name="Yang S."/>
            <person name="Zhang Y."/>
            <person name="Lindpaintner K."/>
            <person name="Andrews T.D."/>
            <person name="Caccamo M."/>
            <person name="Clamp M."/>
            <person name="Clarke L."/>
            <person name="Curwen V."/>
            <person name="Durbin R.M."/>
            <person name="Eyras E."/>
            <person name="Searle S.M."/>
            <person name="Cooper G.M."/>
            <person name="Batzoglou S."/>
            <person name="Brudno M."/>
            <person name="Sidow A."/>
            <person name="Stone E.A."/>
            <person name="Payseur B.A."/>
            <person name="Bourque G."/>
            <person name="Lopez-Otin C."/>
            <person name="Puente X.S."/>
            <person name="Chakrabarti K."/>
            <person name="Chatterji S."/>
            <person name="Dewey C."/>
            <person name="Pachter L."/>
            <person name="Bray N."/>
            <person name="Yap V.B."/>
            <person name="Caspi A."/>
            <person name="Tesler G."/>
            <person name="Pevzner P.A."/>
            <person name="Haussler D."/>
            <person name="Roskin K.M."/>
            <person name="Baertsch R."/>
            <person name="Clawson H."/>
            <person name="Furey T.S."/>
            <person name="Hinrichs A.S."/>
            <person name="Karolchik D."/>
            <person name="Kent W.J."/>
            <person name="Rosenbloom K.R."/>
            <person name="Trumbower H."/>
            <person name="Weirauch M."/>
            <person name="Cooper D.N."/>
            <person name="Stenson P.D."/>
            <person name="Ma B."/>
            <person name="Brent M."/>
            <person name="Arumugam M."/>
            <person name="Shteynberg D."/>
            <person name="Copley R.R."/>
            <person name="Taylor M.S."/>
            <person name="Riethman H."/>
            <person name="Mudunuri U."/>
            <person name="Peterson J."/>
            <person name="Guyer M."/>
            <person name="Felsenfeld A."/>
            <person name="Old S."/>
            <person name="Mockrin S."/>
            <person name="Collins F.S."/>
        </authorList>
    </citation>
    <scope>NUCLEOTIDE SEQUENCE [LARGE SCALE GENOMIC DNA]</scope>
    <source>
        <strain>Brown Norway</strain>
    </source>
</reference>
<reference key="3">
    <citation type="journal article" date="2007" name="J. Clin. Invest.">
        <title>A cardiac myosin light chain kinase regulates sarcomere assembly in the vertebrate heart.</title>
        <authorList>
            <person name="Seguchi O."/>
            <person name="Takashima S."/>
            <person name="Yamazaki S."/>
            <person name="Asakura M."/>
            <person name="Asano Y."/>
            <person name="Shintani Y."/>
            <person name="Wakeno M."/>
            <person name="Minamino T."/>
            <person name="Kondo H."/>
            <person name="Furukawa H."/>
            <person name="Nakamaru K."/>
            <person name="Naito A."/>
            <person name="Takahashi T."/>
            <person name="Ohtsuka T."/>
            <person name="Kawakami K."/>
            <person name="Isomura T."/>
            <person name="Kitamura S."/>
            <person name="Tomoike H."/>
            <person name="Mochizuki N."/>
            <person name="Kitakaze M."/>
        </authorList>
    </citation>
    <scope>FUNCTION</scope>
    <scope>SUBCELLULAR LOCATION</scope>
    <scope>TISSUE SPECIFICITY</scope>
    <scope>DEVELOPMENTAL STAGE</scope>
</reference>
<reference key="4">
    <citation type="journal article" date="2012" name="Nat. Commun.">
        <title>Quantitative maps of protein phosphorylation sites across 14 different rat organs and tissues.</title>
        <authorList>
            <person name="Lundby A."/>
            <person name="Secher A."/>
            <person name="Lage K."/>
            <person name="Nordsborg N.B."/>
            <person name="Dmytriyev A."/>
            <person name="Lundby C."/>
            <person name="Olsen J.V."/>
        </authorList>
    </citation>
    <scope>PHOSPHORYLATION [LARGE SCALE ANALYSIS] AT SER-155; SER-341 AND SER-422</scope>
    <scope>IDENTIFICATION BY MASS SPECTROMETRY [LARGE SCALE ANALYSIS]</scope>
</reference>
<comment type="function">
    <text evidence="5 6">Calmodulin-dependent kinase that phosphorylates MYL2 in vitro. Promotes sarcomere formation in cardiomyocytes. Increases cardiomyocyte contractility.</text>
</comment>
<comment type="catalytic activity">
    <reaction>
        <text>L-seryl-[myosin light chain] + ATP = O-phospho-L-seryl-[myosin light chain] + ADP + H(+)</text>
        <dbReference type="Rhea" id="RHEA:22004"/>
        <dbReference type="Rhea" id="RHEA-COMP:13684"/>
        <dbReference type="Rhea" id="RHEA-COMP:13685"/>
        <dbReference type="ChEBI" id="CHEBI:15378"/>
        <dbReference type="ChEBI" id="CHEBI:29999"/>
        <dbReference type="ChEBI" id="CHEBI:30616"/>
        <dbReference type="ChEBI" id="CHEBI:83421"/>
        <dbReference type="ChEBI" id="CHEBI:456216"/>
        <dbReference type="EC" id="2.7.11.18"/>
    </reaction>
</comment>
<comment type="catalytic activity">
    <reaction>
        <text>L-threonyl-[myosin light chain] + ATP = O-phospho-L-threonyl-[myosin light chain] + ADP + H(+)</text>
        <dbReference type="Rhea" id="RHEA:53900"/>
        <dbReference type="Rhea" id="RHEA-COMP:13686"/>
        <dbReference type="Rhea" id="RHEA-COMP:13687"/>
        <dbReference type="ChEBI" id="CHEBI:15378"/>
        <dbReference type="ChEBI" id="CHEBI:30013"/>
        <dbReference type="ChEBI" id="CHEBI:30616"/>
        <dbReference type="ChEBI" id="CHEBI:61977"/>
        <dbReference type="ChEBI" id="CHEBI:456216"/>
        <dbReference type="EC" id="2.7.11.18"/>
    </reaction>
</comment>
<comment type="cofactor">
    <cofactor evidence="1">
        <name>Mg(2+)</name>
        <dbReference type="ChEBI" id="CHEBI:18420"/>
    </cofactor>
</comment>
<comment type="subcellular location">
    <subcellularLocation>
        <location evidence="5">Cytoplasm</location>
    </subcellularLocation>
</comment>
<comment type="tissue specificity">
    <text evidence="5 6">Expressed in cardiomyocytes (at protein level). Up-regulated in heart after experimental myocardial infarction at the mRNA level.</text>
</comment>
<comment type="developmental stage">
    <text evidence="5">Up-regulated in the heart from 1 week after birth through adulthood.</text>
</comment>
<comment type="induction">
    <text evidence="6">by NRG1 (at protein level).</text>
</comment>
<comment type="PTM">
    <text evidence="1">Phosphorylated on serine residues.</text>
</comment>
<comment type="similarity">
    <text evidence="7">Belongs to the protein kinase superfamily. CAMK Ser/Thr protein kinase family.</text>
</comment>
<organism>
    <name type="scientific">Rattus norvegicus</name>
    <name type="common">Rat</name>
    <dbReference type="NCBI Taxonomy" id="10116"/>
    <lineage>
        <taxon>Eukaryota</taxon>
        <taxon>Metazoa</taxon>
        <taxon>Chordata</taxon>
        <taxon>Craniata</taxon>
        <taxon>Vertebrata</taxon>
        <taxon>Euteleostomi</taxon>
        <taxon>Mammalia</taxon>
        <taxon>Eutheria</taxon>
        <taxon>Euarchontoglires</taxon>
        <taxon>Glires</taxon>
        <taxon>Rodentia</taxon>
        <taxon>Myomorpha</taxon>
        <taxon>Muroidea</taxon>
        <taxon>Muridae</taxon>
        <taxon>Murinae</taxon>
        <taxon>Rattus</taxon>
    </lineage>
</organism>